<organism>
    <name type="scientific">Acetivibrio thermocellus (strain ATCC 27405 / DSM 1237 / JCM 9322 / NBRC 103400 / NCIMB 10682 / NRRL B-4536 / VPI 7372)</name>
    <name type="common">Clostridium thermocellum</name>
    <dbReference type="NCBI Taxonomy" id="203119"/>
    <lineage>
        <taxon>Bacteria</taxon>
        <taxon>Bacillati</taxon>
        <taxon>Bacillota</taxon>
        <taxon>Clostridia</taxon>
        <taxon>Eubacteriales</taxon>
        <taxon>Oscillospiraceae</taxon>
        <taxon>Acetivibrio</taxon>
    </lineage>
</organism>
<sequence length="315" mass="35039">MIEIEKPKIECVVCSEDNRYGKFVVEPLERGYGITLGNSLRRILLSSLPGVAVTSIKIDGILHEFSTIPGVIEDVTEIILNIKELSLNFHGEGPKVIYIDAEGEGEVKAKDIKADADVEILNPEHKIATLSGDHRLYMEMTIDKGRGYVSAEKNKHPGQPIGVIPVDSIFTPVHKVNYTVENTRVGQVTDYDKLTLEVWTNGSIKPDEAISLGAKILSEHLNLFIDLSDNAKNAEIMVEKEETKKEKVLEMTIEELDLSVRSYNCLKRAGINTVEDLISRTEEDMMKVRNLGRKSLEEVVNKLKALGLSLAPSED</sequence>
<proteinExistence type="evidence at protein level"/>
<keyword id="KW-0002">3D-structure</keyword>
<keyword id="KW-0240">DNA-directed RNA polymerase</keyword>
<keyword id="KW-0548">Nucleotidyltransferase</keyword>
<keyword id="KW-1185">Reference proteome</keyword>
<keyword id="KW-0804">Transcription</keyword>
<keyword id="KW-0808">Transferase</keyword>
<evidence type="ECO:0000255" key="1">
    <source>
        <dbReference type="HAMAP-Rule" id="MF_00059"/>
    </source>
</evidence>
<evidence type="ECO:0007829" key="2">
    <source>
        <dbReference type="PDB" id="8I23"/>
    </source>
</evidence>
<evidence type="ECO:0007829" key="3">
    <source>
        <dbReference type="PDB" id="8I24"/>
    </source>
</evidence>
<gene>
    <name evidence="1" type="primary">rpoA</name>
    <name type="ordered locus">Cthe_2932</name>
</gene>
<accession>A3DJK1</accession>
<protein>
    <recommendedName>
        <fullName evidence="1">DNA-directed RNA polymerase subunit alpha</fullName>
        <shortName evidence="1">RNAP subunit alpha</shortName>
        <ecNumber evidence="1">2.7.7.6</ecNumber>
    </recommendedName>
    <alternativeName>
        <fullName evidence="1">RNA polymerase subunit alpha</fullName>
    </alternativeName>
    <alternativeName>
        <fullName evidence="1">Transcriptase subunit alpha</fullName>
    </alternativeName>
</protein>
<dbReference type="EC" id="2.7.7.6" evidence="1"/>
<dbReference type="EMBL" id="CP000568">
    <property type="protein sequence ID" value="ABN54130.1"/>
    <property type="molecule type" value="Genomic_DNA"/>
</dbReference>
<dbReference type="RefSeq" id="WP_020457961.1">
    <property type="nucleotide sequence ID" value="NC_009012.1"/>
</dbReference>
<dbReference type="PDB" id="8I23">
    <property type="method" value="EM"/>
    <property type="resolution" value="3.03 A"/>
    <property type="chains" value="A/B=1-315"/>
</dbReference>
<dbReference type="PDB" id="8I24">
    <property type="method" value="EM"/>
    <property type="resolution" value="3.36 A"/>
    <property type="chains" value="A/B=1-315"/>
</dbReference>
<dbReference type="PDBsum" id="8I23"/>
<dbReference type="PDBsum" id="8I24"/>
<dbReference type="EMDB" id="EMD-35130"/>
<dbReference type="EMDB" id="EMD-35131"/>
<dbReference type="SMR" id="A3DJK1"/>
<dbReference type="STRING" id="203119.Cthe_2932"/>
<dbReference type="GeneID" id="35803681"/>
<dbReference type="KEGG" id="cth:Cthe_2932"/>
<dbReference type="eggNOG" id="COG0202">
    <property type="taxonomic scope" value="Bacteria"/>
</dbReference>
<dbReference type="HOGENOM" id="CLU_053084_0_1_9"/>
<dbReference type="OrthoDB" id="9805706at2"/>
<dbReference type="Proteomes" id="UP000002145">
    <property type="component" value="Chromosome"/>
</dbReference>
<dbReference type="GO" id="GO:0005737">
    <property type="term" value="C:cytoplasm"/>
    <property type="evidence" value="ECO:0007669"/>
    <property type="project" value="UniProtKB-ARBA"/>
</dbReference>
<dbReference type="GO" id="GO:0000428">
    <property type="term" value="C:DNA-directed RNA polymerase complex"/>
    <property type="evidence" value="ECO:0007669"/>
    <property type="project" value="UniProtKB-KW"/>
</dbReference>
<dbReference type="GO" id="GO:0003677">
    <property type="term" value="F:DNA binding"/>
    <property type="evidence" value="ECO:0007669"/>
    <property type="project" value="UniProtKB-UniRule"/>
</dbReference>
<dbReference type="GO" id="GO:0003899">
    <property type="term" value="F:DNA-directed RNA polymerase activity"/>
    <property type="evidence" value="ECO:0007669"/>
    <property type="project" value="UniProtKB-UniRule"/>
</dbReference>
<dbReference type="GO" id="GO:0046983">
    <property type="term" value="F:protein dimerization activity"/>
    <property type="evidence" value="ECO:0007669"/>
    <property type="project" value="InterPro"/>
</dbReference>
<dbReference type="GO" id="GO:0006351">
    <property type="term" value="P:DNA-templated transcription"/>
    <property type="evidence" value="ECO:0007669"/>
    <property type="project" value="UniProtKB-UniRule"/>
</dbReference>
<dbReference type="CDD" id="cd06928">
    <property type="entry name" value="RNAP_alpha_NTD"/>
    <property type="match status" value="1"/>
</dbReference>
<dbReference type="FunFam" id="1.10.150.20:FF:000001">
    <property type="entry name" value="DNA-directed RNA polymerase subunit alpha"/>
    <property type="match status" value="1"/>
</dbReference>
<dbReference type="FunFam" id="2.170.120.12:FF:000001">
    <property type="entry name" value="DNA-directed RNA polymerase subunit alpha"/>
    <property type="match status" value="1"/>
</dbReference>
<dbReference type="Gene3D" id="1.10.150.20">
    <property type="entry name" value="5' to 3' exonuclease, C-terminal subdomain"/>
    <property type="match status" value="1"/>
</dbReference>
<dbReference type="Gene3D" id="2.170.120.12">
    <property type="entry name" value="DNA-directed RNA polymerase, insert domain"/>
    <property type="match status" value="1"/>
</dbReference>
<dbReference type="Gene3D" id="3.30.1360.10">
    <property type="entry name" value="RNA polymerase, RBP11-like subunit"/>
    <property type="match status" value="1"/>
</dbReference>
<dbReference type="HAMAP" id="MF_00059">
    <property type="entry name" value="RNApol_bact_RpoA"/>
    <property type="match status" value="1"/>
</dbReference>
<dbReference type="InterPro" id="IPR011262">
    <property type="entry name" value="DNA-dir_RNA_pol_insert"/>
</dbReference>
<dbReference type="InterPro" id="IPR011263">
    <property type="entry name" value="DNA-dir_RNA_pol_RpoA/D/Rpb3"/>
</dbReference>
<dbReference type="InterPro" id="IPR011773">
    <property type="entry name" value="DNA-dir_RpoA"/>
</dbReference>
<dbReference type="InterPro" id="IPR036603">
    <property type="entry name" value="RBP11-like"/>
</dbReference>
<dbReference type="InterPro" id="IPR011260">
    <property type="entry name" value="RNAP_asu_C"/>
</dbReference>
<dbReference type="InterPro" id="IPR036643">
    <property type="entry name" value="RNApol_insert_sf"/>
</dbReference>
<dbReference type="NCBIfam" id="NF003513">
    <property type="entry name" value="PRK05182.1-2"/>
    <property type="match status" value="1"/>
</dbReference>
<dbReference type="NCBIfam" id="NF003515">
    <property type="entry name" value="PRK05182.2-1"/>
    <property type="match status" value="1"/>
</dbReference>
<dbReference type="NCBIfam" id="NF003516">
    <property type="entry name" value="PRK05182.2-2"/>
    <property type="match status" value="1"/>
</dbReference>
<dbReference type="NCBIfam" id="NF003519">
    <property type="entry name" value="PRK05182.2-5"/>
    <property type="match status" value="1"/>
</dbReference>
<dbReference type="NCBIfam" id="TIGR02027">
    <property type="entry name" value="rpoA"/>
    <property type="match status" value="1"/>
</dbReference>
<dbReference type="Pfam" id="PF01000">
    <property type="entry name" value="RNA_pol_A_bac"/>
    <property type="match status" value="1"/>
</dbReference>
<dbReference type="Pfam" id="PF03118">
    <property type="entry name" value="RNA_pol_A_CTD"/>
    <property type="match status" value="1"/>
</dbReference>
<dbReference type="Pfam" id="PF01193">
    <property type="entry name" value="RNA_pol_L"/>
    <property type="match status" value="1"/>
</dbReference>
<dbReference type="SMART" id="SM00662">
    <property type="entry name" value="RPOLD"/>
    <property type="match status" value="1"/>
</dbReference>
<dbReference type="SUPFAM" id="SSF47789">
    <property type="entry name" value="C-terminal domain of RNA polymerase alpha subunit"/>
    <property type="match status" value="1"/>
</dbReference>
<dbReference type="SUPFAM" id="SSF56553">
    <property type="entry name" value="Insert subdomain of RNA polymerase alpha subunit"/>
    <property type="match status" value="1"/>
</dbReference>
<dbReference type="SUPFAM" id="SSF55257">
    <property type="entry name" value="RBP11-like subunits of RNA polymerase"/>
    <property type="match status" value="1"/>
</dbReference>
<feature type="chain" id="PRO_0000296796" description="DNA-directed RNA polymerase subunit alpha">
    <location>
        <begin position="1"/>
        <end position="315"/>
    </location>
</feature>
<feature type="region of interest" description="Alpha N-terminal domain (alpha-NTD)" evidence="1">
    <location>
        <begin position="1"/>
        <end position="228"/>
    </location>
</feature>
<feature type="region of interest" description="Alpha C-terminal domain (alpha-CTD)" evidence="1">
    <location>
        <begin position="245"/>
        <end position="315"/>
    </location>
</feature>
<feature type="strand" evidence="2">
    <location>
        <begin position="9"/>
        <end position="14"/>
    </location>
</feature>
<feature type="strand" evidence="2">
    <location>
        <begin position="18"/>
        <end position="28"/>
    </location>
</feature>
<feature type="helix" evidence="2">
    <location>
        <begin position="32"/>
        <end position="47"/>
    </location>
</feature>
<feature type="strand" evidence="2">
    <location>
        <begin position="49"/>
        <end position="58"/>
    </location>
</feature>
<feature type="strand" evidence="2">
    <location>
        <begin position="63"/>
        <end position="65"/>
    </location>
</feature>
<feature type="strand" evidence="2">
    <location>
        <begin position="71"/>
        <end position="73"/>
    </location>
</feature>
<feature type="helix" evidence="2">
    <location>
        <begin position="75"/>
        <end position="82"/>
    </location>
</feature>
<feature type="strand" evidence="3">
    <location>
        <begin position="90"/>
        <end position="93"/>
    </location>
</feature>
<feature type="strand" evidence="2">
    <location>
        <begin position="95"/>
        <end position="107"/>
    </location>
</feature>
<feature type="helix" evidence="2">
    <location>
        <begin position="109"/>
        <end position="111"/>
    </location>
</feature>
<feature type="strand" evidence="2">
    <location>
        <begin position="119"/>
        <end position="121"/>
    </location>
</feature>
<feature type="strand" evidence="2">
    <location>
        <begin position="128"/>
        <end position="130"/>
    </location>
</feature>
<feature type="strand" evidence="2">
    <location>
        <begin position="132"/>
        <end position="149"/>
    </location>
</feature>
<feature type="helix" evidence="2">
    <location>
        <begin position="152"/>
        <end position="154"/>
    </location>
</feature>
<feature type="strand" evidence="2">
    <location>
        <begin position="161"/>
        <end position="165"/>
    </location>
</feature>
<feature type="strand" evidence="2">
    <location>
        <begin position="173"/>
        <end position="183"/>
    </location>
</feature>
<feature type="strand" evidence="2">
    <location>
        <begin position="186"/>
        <end position="200"/>
    </location>
</feature>
<feature type="strand" evidence="2">
    <location>
        <begin position="202"/>
        <end position="204"/>
    </location>
</feature>
<feature type="helix" evidence="2">
    <location>
        <begin position="206"/>
        <end position="230"/>
    </location>
</feature>
<reference key="1">
    <citation type="submission" date="2007-02" db="EMBL/GenBank/DDBJ databases">
        <title>Complete sequence of Clostridium thermocellum ATCC 27405.</title>
        <authorList>
            <consortium name="US DOE Joint Genome Institute"/>
            <person name="Copeland A."/>
            <person name="Lucas S."/>
            <person name="Lapidus A."/>
            <person name="Barry K."/>
            <person name="Detter J.C."/>
            <person name="Glavina del Rio T."/>
            <person name="Hammon N."/>
            <person name="Israni S."/>
            <person name="Dalin E."/>
            <person name="Tice H."/>
            <person name="Pitluck S."/>
            <person name="Chertkov O."/>
            <person name="Brettin T."/>
            <person name="Bruce D."/>
            <person name="Han C."/>
            <person name="Tapia R."/>
            <person name="Gilna P."/>
            <person name="Schmutz J."/>
            <person name="Larimer F."/>
            <person name="Land M."/>
            <person name="Hauser L."/>
            <person name="Kyrpides N."/>
            <person name="Mikhailova N."/>
            <person name="Wu J.H.D."/>
            <person name="Newcomb M."/>
            <person name="Richardson P."/>
        </authorList>
    </citation>
    <scope>NUCLEOTIDE SEQUENCE [LARGE SCALE GENOMIC DNA]</scope>
    <source>
        <strain>ATCC 27405 / DSM 1237 / JCM 9322 / NBRC 103400 / NCIMB 10682 / NRRL B-4536 / VPI 7372</strain>
    </source>
</reference>
<comment type="function">
    <text evidence="1">DNA-dependent RNA polymerase catalyzes the transcription of DNA into RNA using the four ribonucleoside triphosphates as substrates.</text>
</comment>
<comment type="catalytic activity">
    <reaction evidence="1">
        <text>RNA(n) + a ribonucleoside 5'-triphosphate = RNA(n+1) + diphosphate</text>
        <dbReference type="Rhea" id="RHEA:21248"/>
        <dbReference type="Rhea" id="RHEA-COMP:14527"/>
        <dbReference type="Rhea" id="RHEA-COMP:17342"/>
        <dbReference type="ChEBI" id="CHEBI:33019"/>
        <dbReference type="ChEBI" id="CHEBI:61557"/>
        <dbReference type="ChEBI" id="CHEBI:140395"/>
        <dbReference type="EC" id="2.7.7.6"/>
    </reaction>
</comment>
<comment type="subunit">
    <text evidence="1">Homodimer. The RNAP catalytic core consists of 2 alpha, 1 beta, 1 beta' and 1 omega subunit. When a sigma factor is associated with the core the holoenzyme is formed, which can initiate transcription.</text>
</comment>
<comment type="domain">
    <text evidence="1">The N-terminal domain is essential for RNAP assembly and basal transcription, whereas the C-terminal domain is involved in interaction with transcriptional regulators and with upstream promoter elements.</text>
</comment>
<comment type="similarity">
    <text evidence="1">Belongs to the RNA polymerase alpha chain family.</text>
</comment>
<name>RPOA_ACET2</name>